<keyword id="KW-0030">Aminoacyl-tRNA synthetase</keyword>
<keyword id="KW-0067">ATP-binding</keyword>
<keyword id="KW-0963">Cytoplasm</keyword>
<keyword id="KW-0436">Ligase</keyword>
<keyword id="KW-0479">Metal-binding</keyword>
<keyword id="KW-0547">Nucleotide-binding</keyword>
<keyword id="KW-0648">Protein biosynthesis</keyword>
<keyword id="KW-1185">Reference proteome</keyword>
<keyword id="KW-0862">Zinc</keyword>
<proteinExistence type="inferred from homology"/>
<protein>
    <recommendedName>
        <fullName evidence="1">Cysteine--tRNA ligase</fullName>
        <ecNumber evidence="1">6.1.1.16</ecNumber>
    </recommendedName>
    <alternativeName>
        <fullName evidence="1">Cysteinyl-tRNA synthetase</fullName>
        <shortName evidence="1">CysRS</shortName>
    </alternativeName>
</protein>
<comment type="catalytic activity">
    <reaction evidence="1">
        <text>tRNA(Cys) + L-cysteine + ATP = L-cysteinyl-tRNA(Cys) + AMP + diphosphate</text>
        <dbReference type="Rhea" id="RHEA:17773"/>
        <dbReference type="Rhea" id="RHEA-COMP:9661"/>
        <dbReference type="Rhea" id="RHEA-COMP:9679"/>
        <dbReference type="ChEBI" id="CHEBI:30616"/>
        <dbReference type="ChEBI" id="CHEBI:33019"/>
        <dbReference type="ChEBI" id="CHEBI:35235"/>
        <dbReference type="ChEBI" id="CHEBI:78442"/>
        <dbReference type="ChEBI" id="CHEBI:78517"/>
        <dbReference type="ChEBI" id="CHEBI:456215"/>
        <dbReference type="EC" id="6.1.1.16"/>
    </reaction>
</comment>
<comment type="cofactor">
    <cofactor evidence="1">
        <name>Zn(2+)</name>
        <dbReference type="ChEBI" id="CHEBI:29105"/>
    </cofactor>
    <text evidence="1">Binds 1 zinc ion per subunit.</text>
</comment>
<comment type="subunit">
    <text evidence="1">Monomer.</text>
</comment>
<comment type="subcellular location">
    <subcellularLocation>
        <location evidence="1">Cytoplasm</location>
    </subcellularLocation>
</comment>
<comment type="similarity">
    <text evidence="1">Belongs to the class-I aminoacyl-tRNA synthetase family.</text>
</comment>
<gene>
    <name evidence="1" type="primary">cysS</name>
    <name type="ordered locus">R01111</name>
    <name type="ORF">SMc02551</name>
</gene>
<name>SYC_RHIME</name>
<sequence>MGGMPILKLYNTLTREKADFRPIDPQNVRMYVCGPTVYDYAHIGNARPIIVFDVLFRLLRHVYGADHVTYARNITDVDDKINARALRDYPGLPLNEAIRHVTEKTETQFLEDATVLGCLDPTVQPRATENIAGMIEIIEKLIAKGHAYEAEGEVLFDTRSMDDYGQLSKRNLDEQQAGARVAVEAHKKNPGDFVLWKLSAEHEPGWDSPWGRGRPGWHIECSAMSGRYLGDVFDIHGGGIDLIFPHHENEIAQSRCAHGTEVMANVWMHNGFLQVEGRKMSKSEGNFITIYELLHTEKFGGRKWPGEVLRLAMLMTHYREPIDFSIKRLEEAEHLLSKWPVYGDAAGEADPAVVTALADDLNTVAAIQALHALAQKASADSRHLGTFAASAALLGVVPKEVELDEAVVHEIDGRVRERLELLKAKNYAEADGIRADLLARGIQLKDGKDPETGERVTTWEVKRSQV</sequence>
<feature type="chain" id="PRO_0000159465" description="Cysteine--tRNA ligase">
    <location>
        <begin position="1"/>
        <end position="466"/>
    </location>
</feature>
<feature type="short sequence motif" description="'HIGH' region">
    <location>
        <begin position="35"/>
        <end position="45"/>
    </location>
</feature>
<feature type="short sequence motif" description="'KMSKS' region">
    <location>
        <begin position="279"/>
        <end position="283"/>
    </location>
</feature>
<feature type="binding site" evidence="1">
    <location>
        <position position="33"/>
    </location>
    <ligand>
        <name>Zn(2+)</name>
        <dbReference type="ChEBI" id="CHEBI:29105"/>
    </ligand>
</feature>
<feature type="binding site" evidence="1">
    <location>
        <position position="221"/>
    </location>
    <ligand>
        <name>Zn(2+)</name>
        <dbReference type="ChEBI" id="CHEBI:29105"/>
    </ligand>
</feature>
<feature type="binding site" evidence="1">
    <location>
        <position position="246"/>
    </location>
    <ligand>
        <name>Zn(2+)</name>
        <dbReference type="ChEBI" id="CHEBI:29105"/>
    </ligand>
</feature>
<feature type="binding site" evidence="1">
    <location>
        <position position="250"/>
    </location>
    <ligand>
        <name>Zn(2+)</name>
        <dbReference type="ChEBI" id="CHEBI:29105"/>
    </ligand>
</feature>
<feature type="binding site" evidence="1">
    <location>
        <position position="282"/>
    </location>
    <ligand>
        <name>ATP</name>
        <dbReference type="ChEBI" id="CHEBI:30616"/>
    </ligand>
</feature>
<reference key="1">
    <citation type="journal article" date="2001" name="Proc. Natl. Acad. Sci. U.S.A.">
        <title>Analysis of the chromosome sequence of the legume symbiont Sinorhizobium meliloti strain 1021.</title>
        <authorList>
            <person name="Capela D."/>
            <person name="Barloy-Hubler F."/>
            <person name="Gouzy J."/>
            <person name="Bothe G."/>
            <person name="Ampe F."/>
            <person name="Batut J."/>
            <person name="Boistard P."/>
            <person name="Becker A."/>
            <person name="Boutry M."/>
            <person name="Cadieu E."/>
            <person name="Dreano S."/>
            <person name="Gloux S."/>
            <person name="Godrie T."/>
            <person name="Goffeau A."/>
            <person name="Kahn D."/>
            <person name="Kiss E."/>
            <person name="Lelaure V."/>
            <person name="Masuy D."/>
            <person name="Pohl T."/>
            <person name="Portetelle D."/>
            <person name="Puehler A."/>
            <person name="Purnelle B."/>
            <person name="Ramsperger U."/>
            <person name="Renard C."/>
            <person name="Thebault P."/>
            <person name="Vandenbol M."/>
            <person name="Weidner S."/>
            <person name="Galibert F."/>
        </authorList>
    </citation>
    <scope>NUCLEOTIDE SEQUENCE [LARGE SCALE GENOMIC DNA]</scope>
    <source>
        <strain>1021</strain>
    </source>
</reference>
<reference key="2">
    <citation type="journal article" date="2001" name="Science">
        <title>The composite genome of the legume symbiont Sinorhizobium meliloti.</title>
        <authorList>
            <person name="Galibert F."/>
            <person name="Finan T.M."/>
            <person name="Long S.R."/>
            <person name="Puehler A."/>
            <person name="Abola P."/>
            <person name="Ampe F."/>
            <person name="Barloy-Hubler F."/>
            <person name="Barnett M.J."/>
            <person name="Becker A."/>
            <person name="Boistard P."/>
            <person name="Bothe G."/>
            <person name="Boutry M."/>
            <person name="Bowser L."/>
            <person name="Buhrmester J."/>
            <person name="Cadieu E."/>
            <person name="Capela D."/>
            <person name="Chain P."/>
            <person name="Cowie A."/>
            <person name="Davis R.W."/>
            <person name="Dreano S."/>
            <person name="Federspiel N.A."/>
            <person name="Fisher R.F."/>
            <person name="Gloux S."/>
            <person name="Godrie T."/>
            <person name="Goffeau A."/>
            <person name="Golding B."/>
            <person name="Gouzy J."/>
            <person name="Gurjal M."/>
            <person name="Hernandez-Lucas I."/>
            <person name="Hong A."/>
            <person name="Huizar L."/>
            <person name="Hyman R.W."/>
            <person name="Jones T."/>
            <person name="Kahn D."/>
            <person name="Kahn M.L."/>
            <person name="Kalman S."/>
            <person name="Keating D.H."/>
            <person name="Kiss E."/>
            <person name="Komp C."/>
            <person name="Lelaure V."/>
            <person name="Masuy D."/>
            <person name="Palm C."/>
            <person name="Peck M.C."/>
            <person name="Pohl T.M."/>
            <person name="Portetelle D."/>
            <person name="Purnelle B."/>
            <person name="Ramsperger U."/>
            <person name="Surzycki R."/>
            <person name="Thebault P."/>
            <person name="Vandenbol M."/>
            <person name="Vorhoelter F.J."/>
            <person name="Weidner S."/>
            <person name="Wells D.H."/>
            <person name="Wong K."/>
            <person name="Yeh K.-C."/>
            <person name="Batut J."/>
        </authorList>
    </citation>
    <scope>NUCLEOTIDE SEQUENCE [LARGE SCALE GENOMIC DNA]</scope>
    <source>
        <strain>1021</strain>
    </source>
</reference>
<dbReference type="EC" id="6.1.1.16" evidence="1"/>
<dbReference type="EMBL" id="AL591688">
    <property type="protein sequence ID" value="CAC45690.1"/>
    <property type="molecule type" value="Genomic_DNA"/>
</dbReference>
<dbReference type="RefSeq" id="NP_385217.1">
    <property type="nucleotide sequence ID" value="NC_003047.1"/>
</dbReference>
<dbReference type="RefSeq" id="WP_010969048.1">
    <property type="nucleotide sequence ID" value="NC_003047.1"/>
</dbReference>
<dbReference type="SMR" id="Q92R20"/>
<dbReference type="EnsemblBacteria" id="CAC45690">
    <property type="protein sequence ID" value="CAC45690"/>
    <property type="gene ID" value="SMc02551"/>
</dbReference>
<dbReference type="KEGG" id="sme:SMc02551"/>
<dbReference type="PATRIC" id="fig|266834.11.peg.2519"/>
<dbReference type="eggNOG" id="COG0215">
    <property type="taxonomic scope" value="Bacteria"/>
</dbReference>
<dbReference type="HOGENOM" id="CLU_013528_0_1_5"/>
<dbReference type="OrthoDB" id="9815130at2"/>
<dbReference type="Proteomes" id="UP000001976">
    <property type="component" value="Chromosome"/>
</dbReference>
<dbReference type="GO" id="GO:0005829">
    <property type="term" value="C:cytosol"/>
    <property type="evidence" value="ECO:0007669"/>
    <property type="project" value="TreeGrafter"/>
</dbReference>
<dbReference type="GO" id="GO:0005524">
    <property type="term" value="F:ATP binding"/>
    <property type="evidence" value="ECO:0007669"/>
    <property type="project" value="UniProtKB-UniRule"/>
</dbReference>
<dbReference type="GO" id="GO:0004817">
    <property type="term" value="F:cysteine-tRNA ligase activity"/>
    <property type="evidence" value="ECO:0007669"/>
    <property type="project" value="UniProtKB-UniRule"/>
</dbReference>
<dbReference type="GO" id="GO:0008270">
    <property type="term" value="F:zinc ion binding"/>
    <property type="evidence" value="ECO:0007669"/>
    <property type="project" value="UniProtKB-UniRule"/>
</dbReference>
<dbReference type="GO" id="GO:0006423">
    <property type="term" value="P:cysteinyl-tRNA aminoacylation"/>
    <property type="evidence" value="ECO:0007669"/>
    <property type="project" value="UniProtKB-UniRule"/>
</dbReference>
<dbReference type="CDD" id="cd00672">
    <property type="entry name" value="CysRS_core"/>
    <property type="match status" value="1"/>
</dbReference>
<dbReference type="FunFam" id="3.40.50.620:FF:000068">
    <property type="entry name" value="Cysteine--tRNA ligase"/>
    <property type="match status" value="1"/>
</dbReference>
<dbReference type="Gene3D" id="3.40.50.620">
    <property type="entry name" value="HUPs"/>
    <property type="match status" value="1"/>
</dbReference>
<dbReference type="HAMAP" id="MF_00041">
    <property type="entry name" value="Cys_tRNA_synth"/>
    <property type="match status" value="1"/>
</dbReference>
<dbReference type="InterPro" id="IPR015803">
    <property type="entry name" value="Cys-tRNA-ligase"/>
</dbReference>
<dbReference type="InterPro" id="IPR024909">
    <property type="entry name" value="Cys-tRNA/MSH_ligase"/>
</dbReference>
<dbReference type="InterPro" id="IPR014729">
    <property type="entry name" value="Rossmann-like_a/b/a_fold"/>
</dbReference>
<dbReference type="InterPro" id="IPR032678">
    <property type="entry name" value="tRNA-synt_1_cat_dom"/>
</dbReference>
<dbReference type="InterPro" id="IPR009080">
    <property type="entry name" value="tRNAsynth_Ia_anticodon-bd"/>
</dbReference>
<dbReference type="NCBIfam" id="TIGR00435">
    <property type="entry name" value="cysS"/>
    <property type="match status" value="1"/>
</dbReference>
<dbReference type="PANTHER" id="PTHR10890:SF3">
    <property type="entry name" value="CYSTEINE--TRNA LIGASE, CYTOPLASMIC"/>
    <property type="match status" value="1"/>
</dbReference>
<dbReference type="PANTHER" id="PTHR10890">
    <property type="entry name" value="CYSTEINYL-TRNA SYNTHETASE"/>
    <property type="match status" value="1"/>
</dbReference>
<dbReference type="Pfam" id="PF01406">
    <property type="entry name" value="tRNA-synt_1e"/>
    <property type="match status" value="1"/>
</dbReference>
<dbReference type="PRINTS" id="PR00983">
    <property type="entry name" value="TRNASYNTHCYS"/>
</dbReference>
<dbReference type="SUPFAM" id="SSF47323">
    <property type="entry name" value="Anticodon-binding domain of a subclass of class I aminoacyl-tRNA synthetases"/>
    <property type="match status" value="1"/>
</dbReference>
<dbReference type="SUPFAM" id="SSF52374">
    <property type="entry name" value="Nucleotidylyl transferase"/>
    <property type="match status" value="1"/>
</dbReference>
<organism>
    <name type="scientific">Rhizobium meliloti (strain 1021)</name>
    <name type="common">Ensifer meliloti</name>
    <name type="synonym">Sinorhizobium meliloti</name>
    <dbReference type="NCBI Taxonomy" id="266834"/>
    <lineage>
        <taxon>Bacteria</taxon>
        <taxon>Pseudomonadati</taxon>
        <taxon>Pseudomonadota</taxon>
        <taxon>Alphaproteobacteria</taxon>
        <taxon>Hyphomicrobiales</taxon>
        <taxon>Rhizobiaceae</taxon>
        <taxon>Sinorhizobium/Ensifer group</taxon>
        <taxon>Sinorhizobium</taxon>
    </lineage>
</organism>
<evidence type="ECO:0000255" key="1">
    <source>
        <dbReference type="HAMAP-Rule" id="MF_00041"/>
    </source>
</evidence>
<accession>Q92R20</accession>